<keyword id="KW-0027">Amidation</keyword>
<keyword id="KW-0903">Direct protein sequencing</keyword>
<keyword id="KW-0527">Neuropeptide</keyword>
<keyword id="KW-0964">Secreted</keyword>
<name>PVK2_SCHGR</name>
<proteinExistence type="evidence at protein level"/>
<sequence length="8" mass="872">GLLAFPRV</sequence>
<accession>P85861</accession>
<dbReference type="GO" id="GO:0005576">
    <property type="term" value="C:extracellular region"/>
    <property type="evidence" value="ECO:0007669"/>
    <property type="project" value="UniProtKB-SubCell"/>
</dbReference>
<dbReference type="GO" id="GO:0007218">
    <property type="term" value="P:neuropeptide signaling pathway"/>
    <property type="evidence" value="ECO:0007669"/>
    <property type="project" value="UniProtKB-KW"/>
</dbReference>
<dbReference type="InterPro" id="IPR013231">
    <property type="entry name" value="Periviscerokinin"/>
</dbReference>
<dbReference type="Pfam" id="PF08259">
    <property type="entry name" value="Periviscerokin"/>
    <property type="match status" value="1"/>
</dbReference>
<organism>
    <name type="scientific">Schistocerca gregaria</name>
    <name type="common">Desert locust</name>
    <name type="synonym">Gryllus gregarius</name>
    <dbReference type="NCBI Taxonomy" id="7010"/>
    <lineage>
        <taxon>Eukaryota</taxon>
        <taxon>Metazoa</taxon>
        <taxon>Ecdysozoa</taxon>
        <taxon>Arthropoda</taxon>
        <taxon>Hexapoda</taxon>
        <taxon>Insecta</taxon>
        <taxon>Pterygota</taxon>
        <taxon>Neoptera</taxon>
        <taxon>Polyneoptera</taxon>
        <taxon>Orthoptera</taxon>
        <taxon>Caelifera</taxon>
        <taxon>Acrididea</taxon>
        <taxon>Acridomorpha</taxon>
        <taxon>Acridoidea</taxon>
        <taxon>Acrididae</taxon>
        <taxon>Cyrtacanthacridinae</taxon>
        <taxon>Schistocerca</taxon>
    </lineage>
</organism>
<feature type="peptide" id="PRO_0000343531" description="Periviscerokinin-2" evidence="3">
    <location>
        <begin position="1"/>
        <end position="8"/>
    </location>
</feature>
<feature type="modified residue" description="Valine amide" evidence="3">
    <location>
        <position position="8"/>
    </location>
</feature>
<evidence type="ECO:0000250" key="1">
    <source>
        <dbReference type="UniProtKB" id="P84352"/>
    </source>
</evidence>
<evidence type="ECO:0000255" key="2"/>
<evidence type="ECO:0000269" key="3">
    <source>
    </source>
</evidence>
<evidence type="ECO:0000305" key="4"/>
<comment type="function">
    <text evidence="1">Mediates visceral muscle contractile activity (myotropic activity).</text>
</comment>
<comment type="subcellular location">
    <subcellularLocation>
        <location evidence="4">Secreted</location>
    </subcellularLocation>
</comment>
<comment type="tissue specificity">
    <text evidence="3">Found in the abdominal ganglia and perisympathetic organs. Sometimes detected in the subesophageal ganglion and thoracic ganglia. Not detected in the corpora cardiaca, corpora allata, hypocerebral ganglion or frontal ganglion.</text>
</comment>
<comment type="mass spectrometry" mass="870.5" method="MALDI" evidence="3"/>
<comment type="similarity">
    <text evidence="2">Belongs to the periviscerokinin family.</text>
</comment>
<reference evidence="4" key="1">
    <citation type="journal article" date="2003" name="Biochem. Biophys. Res. Commun.">
        <title>Mass spectrometric analysis of the perisympathetic organs in locusts: identification of novel periviscerokinins.</title>
        <authorList>
            <person name="Clynen E."/>
            <person name="Huybrechts J."/>
            <person name="De Loof A."/>
            <person name="Schoofs L."/>
        </authorList>
    </citation>
    <scope>PROTEIN SEQUENCE</scope>
    <scope>TISSUE SPECIFICITY</scope>
    <scope>MASS SPECTROMETRY</scope>
    <scope>AMIDATION AT VAL-8</scope>
    <source>
        <tissue evidence="3">Abdominal perisympathetic organs</tissue>
    </source>
</reference>
<protein>
    <recommendedName>
        <fullName>Periviscerokinin-2</fullName>
    </recommendedName>
    <alternativeName>
        <fullName>Lom-PVK-2</fullName>
    </alternativeName>
</protein>